<accession>Q9Z1Z2</accession>
<accession>Q8BP89</accession>
<accession>Q8C6F6</accession>
<proteinExistence type="evidence at protein level"/>
<dbReference type="EMBL" id="AF096285">
    <property type="protein sequence ID" value="AAC98300.1"/>
    <property type="molecule type" value="mRNA"/>
</dbReference>
<dbReference type="EMBL" id="AK075804">
    <property type="protein sequence ID" value="BAC35972.1"/>
    <property type="molecule type" value="mRNA"/>
</dbReference>
<dbReference type="EMBL" id="AK077504">
    <property type="protein sequence ID" value="BAC36834.1"/>
    <property type="molecule type" value="mRNA"/>
</dbReference>
<dbReference type="EMBL" id="AK145971">
    <property type="protein sequence ID" value="BAE26796.1"/>
    <property type="molecule type" value="mRNA"/>
</dbReference>
<dbReference type="EMBL" id="AK152283">
    <property type="protein sequence ID" value="BAE31097.1"/>
    <property type="molecule type" value="mRNA"/>
</dbReference>
<dbReference type="CCDS" id="CCDS51945.1"/>
<dbReference type="RefSeq" id="NP_035629.2">
    <property type="nucleotide sequence ID" value="NM_011499.3"/>
</dbReference>
<dbReference type="SMR" id="Q9Z1Z2"/>
<dbReference type="BioGRID" id="203557">
    <property type="interactions" value="25"/>
</dbReference>
<dbReference type="CORUM" id="Q9Z1Z2"/>
<dbReference type="FunCoup" id="Q9Z1Z2">
    <property type="interactions" value="3681"/>
</dbReference>
<dbReference type="IntAct" id="Q9Z1Z2">
    <property type="interactions" value="2"/>
</dbReference>
<dbReference type="STRING" id="10090.ENSMUSP00000068267"/>
<dbReference type="GlyGen" id="Q9Z1Z2">
    <property type="glycosylation" value="1 site, 1 O-linked glycan (1 site)"/>
</dbReference>
<dbReference type="iPTMnet" id="Q9Z1Z2"/>
<dbReference type="PhosphoSitePlus" id="Q9Z1Z2"/>
<dbReference type="SwissPalm" id="Q9Z1Z2"/>
<dbReference type="REPRODUCTION-2DPAGE" id="IPI00130670"/>
<dbReference type="REPRODUCTION-2DPAGE" id="Q9Z1Z2"/>
<dbReference type="jPOST" id="Q9Z1Z2"/>
<dbReference type="PaxDb" id="10090-ENSMUSP00000068267"/>
<dbReference type="ProteomicsDB" id="258666"/>
<dbReference type="Pumba" id="Q9Z1Z2"/>
<dbReference type="Antibodypedia" id="12145">
    <property type="antibodies" value="220 antibodies from 32 providers"/>
</dbReference>
<dbReference type="DNASU" id="20901"/>
<dbReference type="Ensembl" id="ENSMUST00000064910.7">
    <property type="protein sequence ID" value="ENSMUSP00000068267.7"/>
    <property type="gene ID" value="ENSMUSG00000030224.11"/>
</dbReference>
<dbReference type="GeneID" id="20901"/>
<dbReference type="KEGG" id="mmu:20901"/>
<dbReference type="UCSC" id="uc012euz.1">
    <property type="organism name" value="mouse"/>
</dbReference>
<dbReference type="AGR" id="MGI:1329037"/>
<dbReference type="CTD" id="11171"/>
<dbReference type="MGI" id="MGI:1329037">
    <property type="gene designation" value="Strap"/>
</dbReference>
<dbReference type="VEuPathDB" id="HostDB:ENSMUSG00000030224"/>
<dbReference type="eggNOG" id="KOG0278">
    <property type="taxonomic scope" value="Eukaryota"/>
</dbReference>
<dbReference type="GeneTree" id="ENSGT00940000155197"/>
<dbReference type="HOGENOM" id="CLU_000288_57_6_1"/>
<dbReference type="InParanoid" id="Q9Z1Z2"/>
<dbReference type="OMA" id="DGFYGLW"/>
<dbReference type="OrthoDB" id="200206at2759"/>
<dbReference type="PhylomeDB" id="Q9Z1Z2"/>
<dbReference type="TreeFam" id="TF323287"/>
<dbReference type="Reactome" id="R-MMU-2173788">
    <property type="pathway name" value="Downregulation of TGF-beta receptor signaling"/>
</dbReference>
<dbReference type="BioGRID-ORCS" id="20901">
    <property type="hits" value="25 hits in 82 CRISPR screens"/>
</dbReference>
<dbReference type="ChiTaRS" id="Strap">
    <property type="organism name" value="mouse"/>
</dbReference>
<dbReference type="PRO" id="PR:Q9Z1Z2"/>
<dbReference type="Proteomes" id="UP000000589">
    <property type="component" value="Chromosome 6"/>
</dbReference>
<dbReference type="RNAct" id="Q9Z1Z2">
    <property type="molecule type" value="protein"/>
</dbReference>
<dbReference type="Bgee" id="ENSMUSG00000030224">
    <property type="expression patterns" value="Expressed in mandibular prominence and 290 other cell types or tissues"/>
</dbReference>
<dbReference type="ExpressionAtlas" id="Q9Z1Z2">
    <property type="expression patterns" value="baseline and differential"/>
</dbReference>
<dbReference type="GO" id="GO:0005829">
    <property type="term" value="C:cytosol"/>
    <property type="evidence" value="ECO:0000250"/>
    <property type="project" value="UniProtKB"/>
</dbReference>
<dbReference type="GO" id="GO:0005634">
    <property type="term" value="C:nucleus"/>
    <property type="evidence" value="ECO:0000314"/>
    <property type="project" value="MGI"/>
</dbReference>
<dbReference type="GO" id="GO:0032797">
    <property type="term" value="C:SMN complex"/>
    <property type="evidence" value="ECO:0000250"/>
    <property type="project" value="UniProtKB"/>
</dbReference>
<dbReference type="GO" id="GO:0034719">
    <property type="term" value="C:SMN-Sm protein complex"/>
    <property type="evidence" value="ECO:0000250"/>
    <property type="project" value="UniProtKB"/>
</dbReference>
<dbReference type="GO" id="GO:0003729">
    <property type="term" value="F:mRNA binding"/>
    <property type="evidence" value="ECO:0000314"/>
    <property type="project" value="MGI"/>
</dbReference>
<dbReference type="GO" id="GO:0005102">
    <property type="term" value="F:signaling receptor binding"/>
    <property type="evidence" value="ECO:0000314"/>
    <property type="project" value="MGI"/>
</dbReference>
<dbReference type="GO" id="GO:1990447">
    <property type="term" value="F:U2 snRNP binding"/>
    <property type="evidence" value="ECO:0000314"/>
    <property type="project" value="MGI"/>
</dbReference>
<dbReference type="GO" id="GO:0000380">
    <property type="term" value="P:alternative mRNA splicing, via spliceosome"/>
    <property type="evidence" value="ECO:0000315"/>
    <property type="project" value="MGI"/>
</dbReference>
<dbReference type="GO" id="GO:0030277">
    <property type="term" value="P:maintenance of gastrointestinal epithelium"/>
    <property type="evidence" value="ECO:0007669"/>
    <property type="project" value="Ensembl"/>
</dbReference>
<dbReference type="GO" id="GO:0000122">
    <property type="term" value="P:negative regulation of transcription by RNA polymerase II"/>
    <property type="evidence" value="ECO:0000314"/>
    <property type="project" value="MGI"/>
</dbReference>
<dbReference type="GO" id="GO:0030512">
    <property type="term" value="P:negative regulation of transforming growth factor beta receptor signaling pathway"/>
    <property type="evidence" value="ECO:0000314"/>
    <property type="project" value="MGI"/>
</dbReference>
<dbReference type="GO" id="GO:0030182">
    <property type="term" value="P:neuron differentiation"/>
    <property type="evidence" value="ECO:0000315"/>
    <property type="project" value="MGI"/>
</dbReference>
<dbReference type="GO" id="GO:0022618">
    <property type="term" value="P:protein-RNA complex assembly"/>
    <property type="evidence" value="ECO:0000315"/>
    <property type="project" value="MGI"/>
</dbReference>
<dbReference type="GO" id="GO:0000387">
    <property type="term" value="P:spliceosomal snRNP assembly"/>
    <property type="evidence" value="ECO:0000250"/>
    <property type="project" value="UniProtKB"/>
</dbReference>
<dbReference type="CDD" id="cd00200">
    <property type="entry name" value="WD40"/>
    <property type="match status" value="1"/>
</dbReference>
<dbReference type="FunFam" id="2.130.10.10:FF:000133">
    <property type="entry name" value="Serine-threonine kinase receptor-associated protein"/>
    <property type="match status" value="1"/>
</dbReference>
<dbReference type="Gene3D" id="2.130.10.10">
    <property type="entry name" value="YVTN repeat-like/Quinoprotein amine dehydrogenase"/>
    <property type="match status" value="1"/>
</dbReference>
<dbReference type="InterPro" id="IPR020472">
    <property type="entry name" value="G-protein_beta_WD-40_rep"/>
</dbReference>
<dbReference type="InterPro" id="IPR015943">
    <property type="entry name" value="WD40/YVTN_repeat-like_dom_sf"/>
</dbReference>
<dbReference type="InterPro" id="IPR036322">
    <property type="entry name" value="WD40_repeat_dom_sf"/>
</dbReference>
<dbReference type="InterPro" id="IPR001680">
    <property type="entry name" value="WD40_rpt"/>
</dbReference>
<dbReference type="PANTHER" id="PTHR19877">
    <property type="entry name" value="EUKARYOTIC TRANSLATION INITIATION FACTOR 3 SUBUNIT I"/>
    <property type="match status" value="1"/>
</dbReference>
<dbReference type="PANTHER" id="PTHR19877:SF13">
    <property type="entry name" value="SERINE-THREONINE KINASE RECEPTOR-ASSOCIATED PROTEIN"/>
    <property type="match status" value="1"/>
</dbReference>
<dbReference type="Pfam" id="PF00400">
    <property type="entry name" value="WD40"/>
    <property type="match status" value="6"/>
</dbReference>
<dbReference type="PRINTS" id="PR00320">
    <property type="entry name" value="GPROTEINBRPT"/>
</dbReference>
<dbReference type="SMART" id="SM00320">
    <property type="entry name" value="WD40"/>
    <property type="match status" value="7"/>
</dbReference>
<dbReference type="SUPFAM" id="SSF50978">
    <property type="entry name" value="WD40 repeat-like"/>
    <property type="match status" value="1"/>
</dbReference>
<dbReference type="PROSITE" id="PS00678">
    <property type="entry name" value="WD_REPEATS_1"/>
    <property type="match status" value="1"/>
</dbReference>
<dbReference type="PROSITE" id="PS50082">
    <property type="entry name" value="WD_REPEATS_2"/>
    <property type="match status" value="4"/>
</dbReference>
<dbReference type="PROSITE" id="PS50294">
    <property type="entry name" value="WD_REPEATS_REGION"/>
    <property type="match status" value="1"/>
</dbReference>
<organism>
    <name type="scientific">Mus musculus</name>
    <name type="common">Mouse</name>
    <dbReference type="NCBI Taxonomy" id="10090"/>
    <lineage>
        <taxon>Eukaryota</taxon>
        <taxon>Metazoa</taxon>
        <taxon>Chordata</taxon>
        <taxon>Craniata</taxon>
        <taxon>Vertebrata</taxon>
        <taxon>Euteleostomi</taxon>
        <taxon>Mammalia</taxon>
        <taxon>Eutheria</taxon>
        <taxon>Euarchontoglires</taxon>
        <taxon>Glires</taxon>
        <taxon>Rodentia</taxon>
        <taxon>Myomorpha</taxon>
        <taxon>Muroidea</taxon>
        <taxon>Muridae</taxon>
        <taxon>Murinae</taxon>
        <taxon>Mus</taxon>
        <taxon>Mus</taxon>
    </lineage>
</organism>
<feature type="chain" id="PRO_0000051231" description="Serine-threonine kinase receptor-associated protein">
    <location>
        <begin position="1"/>
        <end position="350"/>
    </location>
</feature>
<feature type="repeat" description="WD 1">
    <location>
        <begin position="12"/>
        <end position="56"/>
    </location>
</feature>
<feature type="repeat" description="WD 2">
    <location>
        <begin position="57"/>
        <end position="96"/>
    </location>
</feature>
<feature type="repeat" description="WD 3">
    <location>
        <begin position="98"/>
        <end position="137"/>
    </location>
</feature>
<feature type="repeat" description="WD 4">
    <location>
        <begin position="141"/>
        <end position="179"/>
    </location>
</feature>
<feature type="repeat" description="WD 5">
    <location>
        <begin position="180"/>
        <end position="212"/>
    </location>
</feature>
<feature type="repeat" description="WD 6">
    <location>
        <begin position="221"/>
        <end position="262"/>
    </location>
</feature>
<feature type="repeat" description="WD 7">
    <location>
        <begin position="263"/>
        <end position="302"/>
    </location>
</feature>
<feature type="region of interest" description="Disordered" evidence="3">
    <location>
        <begin position="326"/>
        <end position="350"/>
    </location>
</feature>
<feature type="compositionally biased region" description="Polar residues" evidence="3">
    <location>
        <begin position="337"/>
        <end position="350"/>
    </location>
</feature>
<feature type="modified residue" description="Phosphoserine" evidence="2">
    <location>
        <position position="312"/>
    </location>
</feature>
<feature type="modified residue" description="Phosphoserine" evidence="2">
    <location>
        <position position="335"/>
    </location>
</feature>
<feature type="modified residue" description="Phosphoserine" evidence="2">
    <location>
        <position position="338"/>
    </location>
</feature>
<feature type="modified residue" description="Phosphotyrosine" evidence="5">
    <location>
        <position position="342"/>
    </location>
</feature>
<feature type="sequence conflict" description="In Ref. 2; BAC36834." evidence="4" ref="2">
    <original>T</original>
    <variation>P</variation>
    <location>
        <position position="288"/>
    </location>
</feature>
<feature type="sequence conflict" description="In Ref. 1; AAC98300." evidence="4" ref="1">
    <original>L</original>
    <variation>LA</variation>
    <location>
        <position position="330"/>
    </location>
</feature>
<protein>
    <recommendedName>
        <fullName>Serine-threonine kinase receptor-associated protein</fullName>
    </recommendedName>
    <alternativeName>
        <fullName>UNR-interacting protein</fullName>
    </alternativeName>
</protein>
<sequence length="350" mass="38442">MAMRQTPLTCSGHTRPVVDLAFSGITPYGYFLISACKDGKPMLRQGDTGDWIGTFLGHKGAVWGATLNKDATKAATAAADFTAKVWDAVSGDELMTLAHKHIVKTVDFTQDSNYLLTGGQDKLLRIYDLNKPEAEPKEISGHTSGIKKALWCSDDKQILSADDKTVRLWDHATMTEVKSLNFNMSVSSMEYIPEGEILVITYGRSIAFHSAVSLEPIKSFEAPATINSASLHPEKEFLVAGGEDFKLYKYDYNSGEELESYKGHFGPIHCVRFSPDGELYASGSEDGTLRLWQTVVGKTYGLWKCVLPEEDSGELAKPKIGFPETAEEELEEIASENSDSIYSSTPEVKA</sequence>
<reference key="1">
    <citation type="journal article" date="1998" name="J. Biol. Chem.">
        <title>Identification of STRAP, a novel WD domain protein in transforming growth factor-beta signaling.</title>
        <authorList>
            <person name="Datta P.K."/>
            <person name="Chytil A."/>
            <person name="Gorska A.E."/>
            <person name="Moses H.L."/>
        </authorList>
    </citation>
    <scope>NUCLEOTIDE SEQUENCE [MRNA]</scope>
</reference>
<reference key="2">
    <citation type="journal article" date="2005" name="Science">
        <title>The transcriptional landscape of the mammalian genome.</title>
        <authorList>
            <person name="Carninci P."/>
            <person name="Kasukawa T."/>
            <person name="Katayama S."/>
            <person name="Gough J."/>
            <person name="Frith M.C."/>
            <person name="Maeda N."/>
            <person name="Oyama R."/>
            <person name="Ravasi T."/>
            <person name="Lenhard B."/>
            <person name="Wells C."/>
            <person name="Kodzius R."/>
            <person name="Shimokawa K."/>
            <person name="Bajic V.B."/>
            <person name="Brenner S.E."/>
            <person name="Batalov S."/>
            <person name="Forrest A.R."/>
            <person name="Zavolan M."/>
            <person name="Davis M.J."/>
            <person name="Wilming L.G."/>
            <person name="Aidinis V."/>
            <person name="Allen J.E."/>
            <person name="Ambesi-Impiombato A."/>
            <person name="Apweiler R."/>
            <person name="Aturaliya R.N."/>
            <person name="Bailey T.L."/>
            <person name="Bansal M."/>
            <person name="Baxter L."/>
            <person name="Beisel K.W."/>
            <person name="Bersano T."/>
            <person name="Bono H."/>
            <person name="Chalk A.M."/>
            <person name="Chiu K.P."/>
            <person name="Choudhary V."/>
            <person name="Christoffels A."/>
            <person name="Clutterbuck D.R."/>
            <person name="Crowe M.L."/>
            <person name="Dalla E."/>
            <person name="Dalrymple B.P."/>
            <person name="de Bono B."/>
            <person name="Della Gatta G."/>
            <person name="di Bernardo D."/>
            <person name="Down T."/>
            <person name="Engstrom P."/>
            <person name="Fagiolini M."/>
            <person name="Faulkner G."/>
            <person name="Fletcher C.F."/>
            <person name="Fukushima T."/>
            <person name="Furuno M."/>
            <person name="Futaki S."/>
            <person name="Gariboldi M."/>
            <person name="Georgii-Hemming P."/>
            <person name="Gingeras T.R."/>
            <person name="Gojobori T."/>
            <person name="Green R.E."/>
            <person name="Gustincich S."/>
            <person name="Harbers M."/>
            <person name="Hayashi Y."/>
            <person name="Hensch T.K."/>
            <person name="Hirokawa N."/>
            <person name="Hill D."/>
            <person name="Huminiecki L."/>
            <person name="Iacono M."/>
            <person name="Ikeo K."/>
            <person name="Iwama A."/>
            <person name="Ishikawa T."/>
            <person name="Jakt M."/>
            <person name="Kanapin A."/>
            <person name="Katoh M."/>
            <person name="Kawasawa Y."/>
            <person name="Kelso J."/>
            <person name="Kitamura H."/>
            <person name="Kitano H."/>
            <person name="Kollias G."/>
            <person name="Krishnan S.P."/>
            <person name="Kruger A."/>
            <person name="Kummerfeld S.K."/>
            <person name="Kurochkin I.V."/>
            <person name="Lareau L.F."/>
            <person name="Lazarevic D."/>
            <person name="Lipovich L."/>
            <person name="Liu J."/>
            <person name="Liuni S."/>
            <person name="McWilliam S."/>
            <person name="Madan Babu M."/>
            <person name="Madera M."/>
            <person name="Marchionni L."/>
            <person name="Matsuda H."/>
            <person name="Matsuzawa S."/>
            <person name="Miki H."/>
            <person name="Mignone F."/>
            <person name="Miyake S."/>
            <person name="Morris K."/>
            <person name="Mottagui-Tabar S."/>
            <person name="Mulder N."/>
            <person name="Nakano N."/>
            <person name="Nakauchi H."/>
            <person name="Ng P."/>
            <person name="Nilsson R."/>
            <person name="Nishiguchi S."/>
            <person name="Nishikawa S."/>
            <person name="Nori F."/>
            <person name="Ohara O."/>
            <person name="Okazaki Y."/>
            <person name="Orlando V."/>
            <person name="Pang K.C."/>
            <person name="Pavan W.J."/>
            <person name="Pavesi G."/>
            <person name="Pesole G."/>
            <person name="Petrovsky N."/>
            <person name="Piazza S."/>
            <person name="Reed J."/>
            <person name="Reid J.F."/>
            <person name="Ring B.Z."/>
            <person name="Ringwald M."/>
            <person name="Rost B."/>
            <person name="Ruan Y."/>
            <person name="Salzberg S.L."/>
            <person name="Sandelin A."/>
            <person name="Schneider C."/>
            <person name="Schoenbach C."/>
            <person name="Sekiguchi K."/>
            <person name="Semple C.A."/>
            <person name="Seno S."/>
            <person name="Sessa L."/>
            <person name="Sheng Y."/>
            <person name="Shibata Y."/>
            <person name="Shimada H."/>
            <person name="Shimada K."/>
            <person name="Silva D."/>
            <person name="Sinclair B."/>
            <person name="Sperling S."/>
            <person name="Stupka E."/>
            <person name="Sugiura K."/>
            <person name="Sultana R."/>
            <person name="Takenaka Y."/>
            <person name="Taki K."/>
            <person name="Tammoja K."/>
            <person name="Tan S.L."/>
            <person name="Tang S."/>
            <person name="Taylor M.S."/>
            <person name="Tegner J."/>
            <person name="Teichmann S.A."/>
            <person name="Ueda H.R."/>
            <person name="van Nimwegen E."/>
            <person name="Verardo R."/>
            <person name="Wei C.L."/>
            <person name="Yagi K."/>
            <person name="Yamanishi H."/>
            <person name="Zabarovsky E."/>
            <person name="Zhu S."/>
            <person name="Zimmer A."/>
            <person name="Hide W."/>
            <person name="Bult C."/>
            <person name="Grimmond S.M."/>
            <person name="Teasdale R.D."/>
            <person name="Liu E.T."/>
            <person name="Brusic V."/>
            <person name="Quackenbush J."/>
            <person name="Wahlestedt C."/>
            <person name="Mattick J.S."/>
            <person name="Hume D.A."/>
            <person name="Kai C."/>
            <person name="Sasaki D."/>
            <person name="Tomaru Y."/>
            <person name="Fukuda S."/>
            <person name="Kanamori-Katayama M."/>
            <person name="Suzuki M."/>
            <person name="Aoki J."/>
            <person name="Arakawa T."/>
            <person name="Iida J."/>
            <person name="Imamura K."/>
            <person name="Itoh M."/>
            <person name="Kato T."/>
            <person name="Kawaji H."/>
            <person name="Kawagashira N."/>
            <person name="Kawashima T."/>
            <person name="Kojima M."/>
            <person name="Kondo S."/>
            <person name="Konno H."/>
            <person name="Nakano K."/>
            <person name="Ninomiya N."/>
            <person name="Nishio T."/>
            <person name="Okada M."/>
            <person name="Plessy C."/>
            <person name="Shibata K."/>
            <person name="Shiraki T."/>
            <person name="Suzuki S."/>
            <person name="Tagami M."/>
            <person name="Waki K."/>
            <person name="Watahiki A."/>
            <person name="Okamura-Oho Y."/>
            <person name="Suzuki H."/>
            <person name="Kawai J."/>
            <person name="Hayashizaki Y."/>
        </authorList>
    </citation>
    <scope>NUCLEOTIDE SEQUENCE [LARGE SCALE MRNA]</scope>
    <source>
        <strain>C57BL/6J</strain>
        <tissue>Bone marrow</tissue>
        <tissue>Embryo</tissue>
        <tissue>Pancreas</tissue>
        <tissue>Placenta</tissue>
    </source>
</reference>
<reference key="3">
    <citation type="journal article" date="2007" name="J. Immunol.">
        <title>Quantitative time-resolved phosphoproteomic analysis of mast cell signaling.</title>
        <authorList>
            <person name="Cao L."/>
            <person name="Yu K."/>
            <person name="Banh C."/>
            <person name="Nguyen V."/>
            <person name="Ritz A."/>
            <person name="Raphael B.J."/>
            <person name="Kawakami Y."/>
            <person name="Kawakami T."/>
            <person name="Salomon A.R."/>
        </authorList>
    </citation>
    <scope>PHOSPHORYLATION [LARGE SCALE ANALYSIS] AT TYR-342</scope>
    <scope>IDENTIFICATION BY MASS SPECTROMETRY [LARGE SCALE ANALYSIS]</scope>
    <source>
        <tissue>Mast cell</tissue>
    </source>
</reference>
<reference key="4">
    <citation type="journal article" date="2010" name="Cell">
        <title>A tissue-specific atlas of mouse protein phosphorylation and expression.</title>
        <authorList>
            <person name="Huttlin E.L."/>
            <person name="Jedrychowski M.P."/>
            <person name="Elias J.E."/>
            <person name="Goswami T."/>
            <person name="Rad R."/>
            <person name="Beausoleil S.A."/>
            <person name="Villen J."/>
            <person name="Haas W."/>
            <person name="Sowa M.E."/>
            <person name="Gygi S.P."/>
        </authorList>
    </citation>
    <scope>IDENTIFICATION BY MASS SPECTROMETRY [LARGE SCALE ANALYSIS]</scope>
    <source>
        <tissue>Brain</tissue>
        <tissue>Brown adipose tissue</tissue>
        <tissue>Heart</tissue>
        <tissue>Kidney</tissue>
        <tissue>Liver</tissue>
        <tissue>Lung</tissue>
        <tissue>Pancreas</tissue>
        <tissue>Spleen</tissue>
        <tissue>Testis</tissue>
    </source>
</reference>
<comment type="function">
    <text evidence="2">The SMN complex catalyzes the assembly of small nuclear ribonucleoproteins (snRNPs), the building blocks of the spliceosome, and thereby plays an important role in the splicing of cellular pre-mRNAs. Most spliceosomal snRNPs contain a common set of Sm proteins SNRPB, SNRPD1, SNRPD2, SNRPD3, SNRPE, SNRPF and SNRPG that assemble in a heptameric protein ring on the Sm site of the small nuclear RNA to form the core snRNP (Sm core). In the cytosol, the Sm proteins SNRPD1, SNRPD2, SNRPE, SNRPF and SNRPG are trapped in an inactive 6S pICln-Sm complex by the chaperone CLNS1A that controls the assembly of the core snRNP. To assemble core snRNPs, the SMN complex accepts the trapped 5Sm proteins from CLNS1A forming an intermediate. Binding of snRNA inside 5Sm triggers eviction of the SMN complex, thereby allowing binding of SNRPD3 and SNRPB to complete assembly of the core snRNP. STRAP plays a role in the cellular distribution of the SMN complex. Negatively regulates TGF-beta signaling but positively regulates the PDPK1 kinase activity by enhancing its autophosphorylation and by significantly reducing the association of PDPK1 with 14-3-3 protein (By similarity).</text>
</comment>
<comment type="subunit">
    <text evidence="2">Part of the core SMN complex that contains SMN1, GEMIN2/SIP1, DDX20/GEMIN3, GEMIN4, GEMIN5, GEMIN6, GEMIN7, GEMIN8 and STRAP/UNRIP. Part of the SMN-Sm complex that contains SMN1, GEMIN2/SIP1, DDX20/GEMIN3, GEMIN4, GEMIN5, GEMIN6, GEMIN7, GEMIN8, STRAP/UNRIP and the Sm proteins SNRPB, SNRPD1, SNRPD2, SNRPD3, SNRPE, SNRPF and SNRPG. Interacts directly with GEMIN6 and GEMIN7. Associates with the SMN complex in the cytoplasm but not in the nucleus. Also interacts with CSDE1/UNR and MAWBP. Interacts with PDPK1. Interacts with TRIM48.</text>
</comment>
<comment type="subcellular location">
    <subcellularLocation>
        <location evidence="1">Cytoplasm</location>
    </subcellularLocation>
    <subcellularLocation>
        <location evidence="1">Nucleus</location>
    </subcellularLocation>
    <text evidence="1">Localized predominantly in the cytoplasm but also found in the nucleus.</text>
</comment>
<comment type="similarity">
    <text evidence="4">Belongs to the WD repeat STRAP family.</text>
</comment>
<gene>
    <name type="primary">Strap</name>
    <name type="synonym">Unrip</name>
</gene>
<evidence type="ECO:0000250" key="1"/>
<evidence type="ECO:0000250" key="2">
    <source>
        <dbReference type="UniProtKB" id="Q9Y3F4"/>
    </source>
</evidence>
<evidence type="ECO:0000256" key="3">
    <source>
        <dbReference type="SAM" id="MobiDB-lite"/>
    </source>
</evidence>
<evidence type="ECO:0000305" key="4"/>
<evidence type="ECO:0007744" key="5">
    <source>
    </source>
</evidence>
<keyword id="KW-0963">Cytoplasm</keyword>
<keyword id="KW-0507">mRNA processing</keyword>
<keyword id="KW-0508">mRNA splicing</keyword>
<keyword id="KW-0539">Nucleus</keyword>
<keyword id="KW-0597">Phosphoprotein</keyword>
<keyword id="KW-1185">Reference proteome</keyword>
<keyword id="KW-0677">Repeat</keyword>
<keyword id="KW-0853">WD repeat</keyword>
<name>STRAP_MOUSE</name>